<gene>
    <name evidence="1" type="primary">trmFO</name>
    <name type="ordered locus">NATL1_14671</name>
</gene>
<sequence>MKEYPSVTVIGAGLAGSEAAWQIASAGIKVTLFEMRPKKKSPAHHSSEFAELVCSNSFGALSSDRAAGLLQEELRTLKSIVINKADKHSVPAGGALAVDRSQFSLSITNELSSHPLITIIRDECPSLPKTQQITILATGPLTSELLAEDIKEFTGEKECHFFDAASPIITGESIDFSTAFRASRYDKGDADYVNCPMNEDSYIKFHSELIKAEQAKLKDFEKESAHFFEGCLPIEQLAKRGIDTMRYGPLKPIGLWDPRWGDVNDKNIRRLKRAHAVVQLRQEDKAGQLWNLVGFQTNLKWGEQKRIFRMIPGLSKAEFIRFGVMHRNTYLESPKLIEPTLQFINRKTLFAAGQLTGTEGYAAAIAGGWLAGTNAALLAKGLDTITLPSSTMIGALTNFVSNSQASLRVKNKKNFQPMPANFGLLPELDNRVHNKRERYKEYRDRALGQIKKLRETLLDKSSYPTTI</sequence>
<accession>A2C3G4</accession>
<name>TRMFO_PROM1</name>
<feature type="chain" id="PRO_0000346382" description="Methylenetetrahydrofolate--tRNA-(uracil-5-)-methyltransferase TrmFO">
    <location>
        <begin position="1"/>
        <end position="467"/>
    </location>
</feature>
<feature type="binding site" evidence="1">
    <location>
        <begin position="11"/>
        <end position="16"/>
    </location>
    <ligand>
        <name>FAD</name>
        <dbReference type="ChEBI" id="CHEBI:57692"/>
    </ligand>
</feature>
<evidence type="ECO:0000255" key="1">
    <source>
        <dbReference type="HAMAP-Rule" id="MF_01037"/>
    </source>
</evidence>
<protein>
    <recommendedName>
        <fullName evidence="1">Methylenetetrahydrofolate--tRNA-(uracil-5-)-methyltransferase TrmFO</fullName>
        <ecNumber evidence="1">2.1.1.74</ecNumber>
    </recommendedName>
    <alternativeName>
        <fullName evidence="1">Folate-dependent tRNA (uracil-5-)-methyltransferase</fullName>
    </alternativeName>
    <alternativeName>
        <fullName evidence="1">Folate-dependent tRNA(M-5-U54)-methyltransferase</fullName>
    </alternativeName>
</protein>
<reference key="1">
    <citation type="journal article" date="2007" name="PLoS Genet.">
        <title>Patterns and implications of gene gain and loss in the evolution of Prochlorococcus.</title>
        <authorList>
            <person name="Kettler G.C."/>
            <person name="Martiny A.C."/>
            <person name="Huang K."/>
            <person name="Zucker J."/>
            <person name="Coleman M.L."/>
            <person name="Rodrigue S."/>
            <person name="Chen F."/>
            <person name="Lapidus A."/>
            <person name="Ferriera S."/>
            <person name="Johnson J."/>
            <person name="Steglich C."/>
            <person name="Church G.M."/>
            <person name="Richardson P."/>
            <person name="Chisholm S.W."/>
        </authorList>
    </citation>
    <scope>NUCLEOTIDE SEQUENCE [LARGE SCALE GENOMIC DNA]</scope>
    <source>
        <strain>NATL1A</strain>
    </source>
</reference>
<keyword id="KW-0963">Cytoplasm</keyword>
<keyword id="KW-0274">FAD</keyword>
<keyword id="KW-0285">Flavoprotein</keyword>
<keyword id="KW-0489">Methyltransferase</keyword>
<keyword id="KW-0520">NAD</keyword>
<keyword id="KW-0521">NADP</keyword>
<keyword id="KW-0808">Transferase</keyword>
<keyword id="KW-0819">tRNA processing</keyword>
<dbReference type="EC" id="2.1.1.74" evidence="1"/>
<dbReference type="EMBL" id="CP000553">
    <property type="protein sequence ID" value="ABM76024.1"/>
    <property type="molecule type" value="Genomic_DNA"/>
</dbReference>
<dbReference type="RefSeq" id="WP_011824050.1">
    <property type="nucleotide sequence ID" value="NC_008819.1"/>
</dbReference>
<dbReference type="SMR" id="A2C3G4"/>
<dbReference type="KEGG" id="pme:NATL1_14671"/>
<dbReference type="eggNOG" id="COG1206">
    <property type="taxonomic scope" value="Bacteria"/>
</dbReference>
<dbReference type="HOGENOM" id="CLU_033057_1_0_3"/>
<dbReference type="Proteomes" id="UP000002592">
    <property type="component" value="Chromosome"/>
</dbReference>
<dbReference type="GO" id="GO:0005829">
    <property type="term" value="C:cytosol"/>
    <property type="evidence" value="ECO:0007669"/>
    <property type="project" value="TreeGrafter"/>
</dbReference>
<dbReference type="GO" id="GO:0050660">
    <property type="term" value="F:flavin adenine dinucleotide binding"/>
    <property type="evidence" value="ECO:0007669"/>
    <property type="project" value="UniProtKB-UniRule"/>
</dbReference>
<dbReference type="GO" id="GO:0047151">
    <property type="term" value="F:tRNA (uracil(54)-C5)-methyltransferase activity, 5,10-methylenetetrahydrofolate-dependent"/>
    <property type="evidence" value="ECO:0007669"/>
    <property type="project" value="UniProtKB-UniRule"/>
</dbReference>
<dbReference type="GO" id="GO:0030488">
    <property type="term" value="P:tRNA methylation"/>
    <property type="evidence" value="ECO:0007669"/>
    <property type="project" value="TreeGrafter"/>
</dbReference>
<dbReference type="GO" id="GO:0002098">
    <property type="term" value="P:tRNA wobble uridine modification"/>
    <property type="evidence" value="ECO:0007669"/>
    <property type="project" value="TreeGrafter"/>
</dbReference>
<dbReference type="Gene3D" id="3.50.50.60">
    <property type="entry name" value="FAD/NAD(P)-binding domain"/>
    <property type="match status" value="2"/>
</dbReference>
<dbReference type="HAMAP" id="MF_01037">
    <property type="entry name" value="TrmFO"/>
    <property type="match status" value="1"/>
</dbReference>
<dbReference type="InterPro" id="IPR036188">
    <property type="entry name" value="FAD/NAD-bd_sf"/>
</dbReference>
<dbReference type="InterPro" id="IPR002218">
    <property type="entry name" value="MnmG-rel"/>
</dbReference>
<dbReference type="InterPro" id="IPR040131">
    <property type="entry name" value="MnmG_N"/>
</dbReference>
<dbReference type="InterPro" id="IPR004417">
    <property type="entry name" value="TrmFO"/>
</dbReference>
<dbReference type="NCBIfam" id="TIGR00137">
    <property type="entry name" value="gid_trmFO"/>
    <property type="match status" value="1"/>
</dbReference>
<dbReference type="NCBIfam" id="NF003739">
    <property type="entry name" value="PRK05335.1"/>
    <property type="match status" value="1"/>
</dbReference>
<dbReference type="PANTHER" id="PTHR11806">
    <property type="entry name" value="GLUCOSE INHIBITED DIVISION PROTEIN A"/>
    <property type="match status" value="1"/>
</dbReference>
<dbReference type="PANTHER" id="PTHR11806:SF2">
    <property type="entry name" value="METHYLENETETRAHYDROFOLATE--TRNA-(URACIL-5-)-METHYLTRANSFERASE TRMFO"/>
    <property type="match status" value="1"/>
</dbReference>
<dbReference type="Pfam" id="PF01134">
    <property type="entry name" value="GIDA"/>
    <property type="match status" value="1"/>
</dbReference>
<dbReference type="SUPFAM" id="SSF51905">
    <property type="entry name" value="FAD/NAD(P)-binding domain"/>
    <property type="match status" value="1"/>
</dbReference>
<proteinExistence type="inferred from homology"/>
<comment type="function">
    <text evidence="1">Catalyzes the folate-dependent formation of 5-methyl-uridine at position 54 (M-5-U54) in all tRNAs.</text>
</comment>
<comment type="catalytic activity">
    <reaction evidence="1">
        <text>uridine(54) in tRNA + (6R)-5,10-methylene-5,6,7,8-tetrahydrofolate + NADH + H(+) = 5-methyluridine(54) in tRNA + (6S)-5,6,7,8-tetrahydrofolate + NAD(+)</text>
        <dbReference type="Rhea" id="RHEA:16873"/>
        <dbReference type="Rhea" id="RHEA-COMP:10167"/>
        <dbReference type="Rhea" id="RHEA-COMP:10193"/>
        <dbReference type="ChEBI" id="CHEBI:15378"/>
        <dbReference type="ChEBI" id="CHEBI:15636"/>
        <dbReference type="ChEBI" id="CHEBI:57453"/>
        <dbReference type="ChEBI" id="CHEBI:57540"/>
        <dbReference type="ChEBI" id="CHEBI:57945"/>
        <dbReference type="ChEBI" id="CHEBI:65315"/>
        <dbReference type="ChEBI" id="CHEBI:74447"/>
        <dbReference type="EC" id="2.1.1.74"/>
    </reaction>
</comment>
<comment type="catalytic activity">
    <reaction evidence="1">
        <text>uridine(54) in tRNA + (6R)-5,10-methylene-5,6,7,8-tetrahydrofolate + NADPH + H(+) = 5-methyluridine(54) in tRNA + (6S)-5,6,7,8-tetrahydrofolate + NADP(+)</text>
        <dbReference type="Rhea" id="RHEA:62372"/>
        <dbReference type="Rhea" id="RHEA-COMP:10167"/>
        <dbReference type="Rhea" id="RHEA-COMP:10193"/>
        <dbReference type="ChEBI" id="CHEBI:15378"/>
        <dbReference type="ChEBI" id="CHEBI:15636"/>
        <dbReference type="ChEBI" id="CHEBI:57453"/>
        <dbReference type="ChEBI" id="CHEBI:57783"/>
        <dbReference type="ChEBI" id="CHEBI:58349"/>
        <dbReference type="ChEBI" id="CHEBI:65315"/>
        <dbReference type="ChEBI" id="CHEBI:74447"/>
        <dbReference type="EC" id="2.1.1.74"/>
    </reaction>
</comment>
<comment type="cofactor">
    <cofactor evidence="1">
        <name>FAD</name>
        <dbReference type="ChEBI" id="CHEBI:57692"/>
    </cofactor>
</comment>
<comment type="subcellular location">
    <subcellularLocation>
        <location evidence="1">Cytoplasm</location>
    </subcellularLocation>
</comment>
<comment type="similarity">
    <text evidence="1">Belongs to the MnmG family. TrmFO subfamily.</text>
</comment>
<organism>
    <name type="scientific">Prochlorococcus marinus (strain NATL1A)</name>
    <dbReference type="NCBI Taxonomy" id="167555"/>
    <lineage>
        <taxon>Bacteria</taxon>
        <taxon>Bacillati</taxon>
        <taxon>Cyanobacteriota</taxon>
        <taxon>Cyanophyceae</taxon>
        <taxon>Synechococcales</taxon>
        <taxon>Prochlorococcaceae</taxon>
        <taxon>Prochlorococcus</taxon>
    </lineage>
</organism>